<organismHost>
    <name type="scientific">Magallana gigas</name>
    <name type="common">Pacific oyster</name>
    <name type="synonym">Crassostrea gigas</name>
    <dbReference type="NCBI Taxonomy" id="29159"/>
</organismHost>
<organismHost>
    <name type="scientific">Pecten maximus</name>
    <name type="common">King scallop</name>
    <name type="synonym">Pilgrim's clam</name>
    <dbReference type="NCBI Taxonomy" id="6579"/>
</organismHost>
<accession>Q6R7J2</accession>
<protein>
    <recommendedName>
        <fullName>Uncharacterized protein ORF31</fullName>
    </recommendedName>
</protein>
<dbReference type="EMBL" id="AY509253">
    <property type="protein sequence ID" value="AAS00923.1"/>
    <property type="molecule type" value="Genomic_DNA"/>
</dbReference>
<dbReference type="RefSeq" id="YP_024576.1">
    <property type="nucleotide sequence ID" value="NC_005881.2"/>
</dbReference>
<dbReference type="SMR" id="Q6R7J2"/>
<dbReference type="KEGG" id="vg:2948207"/>
<dbReference type="Proteomes" id="UP000007021">
    <property type="component" value="Segment"/>
</dbReference>
<keyword id="KW-1185">Reference proteome</keyword>
<reference key="1">
    <citation type="journal article" date="2005" name="J. Gen. Virol.">
        <title>A novel class of herpesvirus with bivalve hosts.</title>
        <authorList>
            <person name="Davison A.J."/>
            <person name="Trus B.L."/>
            <person name="Cheng N."/>
            <person name="Steven A.C."/>
            <person name="Watson M.S."/>
            <person name="Cunningham C."/>
            <person name="Le Deuff R.M."/>
            <person name="Renault T."/>
        </authorList>
    </citation>
    <scope>NUCLEOTIDE SEQUENCE [LARGE SCALE GENOMIC DNA]</scope>
</reference>
<sequence length="185" mass="21746">MAGRLSFDMNEEACVYHVKDKHRDRKRIKKFLCGMDSLNKTTNVSEKVIDGFIEMDIDIEVENGRVTPITADEYIEDIAAMDDRFEVLYWLIIIGGDANRWRELRRECINHYNKVKVCNKMVNEYEYGFTIIESDDDEQGISGGWPKTSSSYRKDRWKLQNILTKERPGLTALFIFMMRLAGDYY</sequence>
<proteinExistence type="predicted"/>
<organism>
    <name type="scientific">Ostreid herpesvirus 1 (isolate France)</name>
    <name type="common">OsHV-1</name>
    <name type="synonym">Pacific oyster herpesvirus</name>
    <dbReference type="NCBI Taxonomy" id="654903"/>
    <lineage>
        <taxon>Viruses</taxon>
        <taxon>Duplodnaviria</taxon>
        <taxon>Heunggongvirae</taxon>
        <taxon>Peploviricota</taxon>
        <taxon>Herviviricetes</taxon>
        <taxon>Herpesvirales</taxon>
        <taxon>Malacoherpesviridae</taxon>
        <taxon>Ostreavirus</taxon>
        <taxon>Ostreavirus ostreidmalaco1</taxon>
        <taxon>Ostreid herpesvirus 1</taxon>
    </lineage>
</organism>
<name>Y031_OSHVF</name>
<gene>
    <name type="ORF">ORF30</name>
</gene>
<feature type="chain" id="PRO_0000385062" description="Uncharacterized protein ORF31">
    <location>
        <begin position="1"/>
        <end position="185"/>
    </location>
</feature>